<reference key="1">
    <citation type="journal article" date="2006" name="Genes Genet. Syst.">
        <title>Complete nucleotide sequence of the cotton (Gossypium barbadense L.) chloroplast genome with a comparative analysis of sequences among 9 dicot plants.</title>
        <authorList>
            <person name="Ibrahim R.I.H."/>
            <person name="Azuma J."/>
            <person name="Sakamoto M."/>
        </authorList>
    </citation>
    <scope>NUCLEOTIDE SEQUENCE [LARGE SCALE GENOMIC DNA]</scope>
</reference>
<keyword id="KW-0150">Chloroplast</keyword>
<keyword id="KW-0934">Plastid</keyword>
<keyword id="KW-0687">Ribonucleoprotein</keyword>
<keyword id="KW-0689">Ribosomal protein</keyword>
<gene>
    <name evidence="1" type="primary">rpl16</name>
</gene>
<proteinExistence type="inferred from homology"/>
<feature type="chain" id="PRO_0000276383" description="Large ribosomal subunit protein uL16c">
    <location>
        <begin position="1"/>
        <end position="135"/>
    </location>
</feature>
<organism>
    <name type="scientific">Gossypium barbadense</name>
    <name type="common">Sea Island cotton</name>
    <name type="synonym">Hibiscus barbadensis</name>
    <dbReference type="NCBI Taxonomy" id="3634"/>
    <lineage>
        <taxon>Eukaryota</taxon>
        <taxon>Viridiplantae</taxon>
        <taxon>Streptophyta</taxon>
        <taxon>Embryophyta</taxon>
        <taxon>Tracheophyta</taxon>
        <taxon>Spermatophyta</taxon>
        <taxon>Magnoliopsida</taxon>
        <taxon>eudicotyledons</taxon>
        <taxon>Gunneridae</taxon>
        <taxon>Pentapetalae</taxon>
        <taxon>rosids</taxon>
        <taxon>malvids</taxon>
        <taxon>Malvales</taxon>
        <taxon>Malvaceae</taxon>
        <taxon>Malvoideae</taxon>
        <taxon>Gossypium</taxon>
    </lineage>
</organism>
<name>RK16_GOSBA</name>
<comment type="subunit">
    <text evidence="1">Part of the 50S ribosomal subunit.</text>
</comment>
<comment type="subcellular location">
    <subcellularLocation>
        <location>Plastid</location>
        <location>Chloroplast</location>
    </subcellularLocation>
</comment>
<comment type="similarity">
    <text evidence="1">Belongs to the universal ribosomal protein uL16 family.</text>
</comment>
<sequence length="135" mass="15376">MLSPKRTRFRKQHRGRMKGISYRGNRICFGRYALQALEPAWITSRQIEAGRRAMTRNVRRGGKIWVRIFPDKPVTVRPTETRMGSGKGSPEYWVAVVKPGRILYEMSGVAENIARKAISIVASKMPIKTQFIISG</sequence>
<evidence type="ECO:0000255" key="1">
    <source>
        <dbReference type="HAMAP-Rule" id="MF_01342"/>
    </source>
</evidence>
<evidence type="ECO:0000305" key="2"/>
<dbReference type="EMBL" id="AP009123">
    <property type="protein sequence ID" value="BAF41284.1"/>
    <property type="molecule type" value="Genomic_DNA"/>
</dbReference>
<dbReference type="RefSeq" id="YP_913224.1">
    <property type="nucleotide sequence ID" value="NC_008641.1"/>
</dbReference>
<dbReference type="SMR" id="A0ZZ72"/>
<dbReference type="GeneID" id="4575234"/>
<dbReference type="GO" id="GO:0009507">
    <property type="term" value="C:chloroplast"/>
    <property type="evidence" value="ECO:0007669"/>
    <property type="project" value="UniProtKB-SubCell"/>
</dbReference>
<dbReference type="GO" id="GO:0005762">
    <property type="term" value="C:mitochondrial large ribosomal subunit"/>
    <property type="evidence" value="ECO:0007669"/>
    <property type="project" value="TreeGrafter"/>
</dbReference>
<dbReference type="GO" id="GO:0019843">
    <property type="term" value="F:rRNA binding"/>
    <property type="evidence" value="ECO:0007669"/>
    <property type="project" value="InterPro"/>
</dbReference>
<dbReference type="GO" id="GO:0003735">
    <property type="term" value="F:structural constituent of ribosome"/>
    <property type="evidence" value="ECO:0007669"/>
    <property type="project" value="InterPro"/>
</dbReference>
<dbReference type="GO" id="GO:0032543">
    <property type="term" value="P:mitochondrial translation"/>
    <property type="evidence" value="ECO:0007669"/>
    <property type="project" value="TreeGrafter"/>
</dbReference>
<dbReference type="CDD" id="cd01433">
    <property type="entry name" value="Ribosomal_L16_L10e"/>
    <property type="match status" value="1"/>
</dbReference>
<dbReference type="FunFam" id="3.90.1170.10:FF:000001">
    <property type="entry name" value="50S ribosomal protein L16"/>
    <property type="match status" value="1"/>
</dbReference>
<dbReference type="Gene3D" id="3.90.1170.10">
    <property type="entry name" value="Ribosomal protein L10e/L16"/>
    <property type="match status" value="1"/>
</dbReference>
<dbReference type="HAMAP" id="MF_01342">
    <property type="entry name" value="Ribosomal_uL16"/>
    <property type="match status" value="1"/>
</dbReference>
<dbReference type="InterPro" id="IPR047873">
    <property type="entry name" value="Ribosomal_uL16"/>
</dbReference>
<dbReference type="InterPro" id="IPR000114">
    <property type="entry name" value="Ribosomal_uL16_bact-type"/>
</dbReference>
<dbReference type="InterPro" id="IPR020798">
    <property type="entry name" value="Ribosomal_uL16_CS"/>
</dbReference>
<dbReference type="InterPro" id="IPR016180">
    <property type="entry name" value="Ribosomal_uL16_dom"/>
</dbReference>
<dbReference type="InterPro" id="IPR036920">
    <property type="entry name" value="Ribosomal_uL16_sf"/>
</dbReference>
<dbReference type="NCBIfam" id="TIGR01164">
    <property type="entry name" value="rplP_bact"/>
    <property type="match status" value="1"/>
</dbReference>
<dbReference type="PANTHER" id="PTHR12220">
    <property type="entry name" value="50S/60S RIBOSOMAL PROTEIN L16"/>
    <property type="match status" value="1"/>
</dbReference>
<dbReference type="PANTHER" id="PTHR12220:SF13">
    <property type="entry name" value="LARGE RIBOSOMAL SUBUNIT PROTEIN UL16M"/>
    <property type="match status" value="1"/>
</dbReference>
<dbReference type="Pfam" id="PF00252">
    <property type="entry name" value="Ribosomal_L16"/>
    <property type="match status" value="1"/>
</dbReference>
<dbReference type="PRINTS" id="PR00060">
    <property type="entry name" value="RIBOSOMALL16"/>
</dbReference>
<dbReference type="SUPFAM" id="SSF54686">
    <property type="entry name" value="Ribosomal protein L16p/L10e"/>
    <property type="match status" value="1"/>
</dbReference>
<dbReference type="PROSITE" id="PS00586">
    <property type="entry name" value="RIBOSOMAL_L16_1"/>
    <property type="match status" value="1"/>
</dbReference>
<dbReference type="PROSITE" id="PS00701">
    <property type="entry name" value="RIBOSOMAL_L16_2"/>
    <property type="match status" value="1"/>
</dbReference>
<accession>A0ZZ72</accession>
<geneLocation type="chloroplast"/>
<protein>
    <recommendedName>
        <fullName evidence="1">Large ribosomal subunit protein uL16c</fullName>
    </recommendedName>
    <alternativeName>
        <fullName evidence="2">50S ribosomal protein L16, chloroplastic</fullName>
    </alternativeName>
</protein>